<organism evidence="7">
    <name type="scientific">Archaeoglobus fulgidus (strain ATCC 49558 / DSM 4304 / JCM 9628 / NBRC 100126 / VC-16)</name>
    <dbReference type="NCBI Taxonomy" id="224325"/>
    <lineage>
        <taxon>Archaea</taxon>
        <taxon>Methanobacteriati</taxon>
        <taxon>Methanobacteriota</taxon>
        <taxon>Archaeoglobi</taxon>
        <taxon>Archaeoglobales</taxon>
        <taxon>Archaeoglobaceae</taxon>
        <taxon>Archaeoglobus</taxon>
    </lineage>
</organism>
<evidence type="ECO:0000250" key="1">
    <source>
        <dbReference type="UniProtKB" id="Q9RFC8"/>
    </source>
</evidence>
<evidence type="ECO:0000255" key="2"/>
<evidence type="ECO:0000269" key="3">
    <source>
    </source>
</evidence>
<evidence type="ECO:0000303" key="4">
    <source>
    </source>
</evidence>
<evidence type="ECO:0000305" key="5"/>
<evidence type="ECO:0000312" key="6">
    <source>
        <dbReference type="EMBL" id="AAB89774.1"/>
    </source>
</evidence>
<evidence type="ECO:0000312" key="7">
    <source>
        <dbReference type="Proteomes" id="UP000002199"/>
    </source>
</evidence>
<comment type="function">
    <text evidence="1 3">Binds tetrapyrroles and promotes the photooxidative degradation of protoporphyrin IX (PubMed:23651039). May play a role in the transmembrane transport of tetrapyrroles and similar compounds (By similarity).</text>
</comment>
<comment type="subcellular location">
    <subcellularLocation>
        <location evidence="5">Cell membrane</location>
        <topology evidence="5">Multi-pass membrane protein</topology>
    </subcellularLocation>
</comment>
<comment type="similarity">
    <text evidence="5">Belongs to the TspO/BZRP family.</text>
</comment>
<accession>O28797</accession>
<proteinExistence type="inferred from homology"/>
<feature type="chain" id="PRO_0000432573" description="Tryptophan-rich protein TspO">
    <location>
        <begin position="1"/>
        <end position="153"/>
    </location>
</feature>
<feature type="transmembrane region" description="Helical; Name=1" evidence="2">
    <location>
        <begin position="3"/>
        <end position="23"/>
    </location>
</feature>
<feature type="transmembrane region" description="Helical; Name=2" evidence="2">
    <location>
        <begin position="45"/>
        <end position="65"/>
    </location>
</feature>
<feature type="transmembrane region" description="Helical; Name=3" evidence="2">
    <location>
        <begin position="78"/>
        <end position="98"/>
    </location>
</feature>
<feature type="transmembrane region" description="Helical; Name=4" evidence="2">
    <location>
        <begin position="101"/>
        <end position="121"/>
    </location>
</feature>
<feature type="transmembrane region" description="Helical; Name=5" evidence="2">
    <location>
        <begin position="129"/>
        <end position="149"/>
    </location>
</feature>
<reference evidence="6" key="1">
    <citation type="journal article" date="1997" name="Nature">
        <title>The complete genome sequence of the hyperthermophilic, sulphate-reducing archaeon Archaeoglobus fulgidus.</title>
        <authorList>
            <person name="Klenk H.-P."/>
            <person name="Clayton R.A."/>
            <person name="Tomb J.-F."/>
            <person name="White O."/>
            <person name="Nelson K.E."/>
            <person name="Ketchum K.A."/>
            <person name="Dodson R.J."/>
            <person name="Gwinn M.L."/>
            <person name="Hickey E.K."/>
            <person name="Peterson J.D."/>
            <person name="Richardson D.L."/>
            <person name="Kerlavage A.R."/>
            <person name="Graham D.E."/>
            <person name="Kyrpides N.C."/>
            <person name="Fleischmann R.D."/>
            <person name="Quackenbush J."/>
            <person name="Lee N.H."/>
            <person name="Sutton G.G."/>
            <person name="Gill S.R."/>
            <person name="Kirkness E.F."/>
            <person name="Dougherty B.A."/>
            <person name="McKenney K."/>
            <person name="Adams M.D."/>
            <person name="Loftus B.J."/>
            <person name="Peterson S.N."/>
            <person name="Reich C.I."/>
            <person name="McNeil L.K."/>
            <person name="Badger J.H."/>
            <person name="Glodek A."/>
            <person name="Zhou L."/>
            <person name="Overbeek R."/>
            <person name="Gocayne J.D."/>
            <person name="Weidman J.F."/>
            <person name="McDonald L.A."/>
            <person name="Utterback T.R."/>
            <person name="Cotton M.D."/>
            <person name="Spriggs T."/>
            <person name="Artiach P."/>
            <person name="Kaine B.P."/>
            <person name="Sykes S.M."/>
            <person name="Sadow P.W."/>
            <person name="D'Andrea K.P."/>
            <person name="Bowman C."/>
            <person name="Fujii C."/>
            <person name="Garland S.A."/>
            <person name="Mason T.M."/>
            <person name="Olsen G.J."/>
            <person name="Fraser C.M."/>
            <person name="Smith H.O."/>
            <person name="Woese C.R."/>
            <person name="Venter J.C."/>
        </authorList>
    </citation>
    <scope>NUCLEOTIDE SEQUENCE [LARGE SCALE GENOMIC DNA]</scope>
    <source>
        <strain evidence="7">ATCC 49558 / DSM 4304 / JCM 9628 / NBRC 100126 / VC-16</strain>
    </source>
</reference>
<reference key="2">
    <citation type="journal article" date="2013" name="Biochemistry">
        <title>Chemical catalysis by the translocator protein (18 kDa).</title>
        <authorList>
            <person name="Ginter C."/>
            <person name="Kiburu I."/>
            <person name="Boudker O."/>
        </authorList>
    </citation>
    <scope>FUNCTION</scope>
    <scope>SUBCELLULAR LOCATION</scope>
</reference>
<sequence length="153" mass="17185">MNILKLVASILAVLAIGFAGSFFTAQSVQTWYAGVEKPFFTPPNWLFGPAWTLLYFLIGIVLYIAWENGFWNDSRVKATFFTQLGLNFLWSILFFGLQNPLAGLVDIIALDIAVILTIVYIYHHSKASLLLLPYLGWILFASALNFAIYLLNA</sequence>
<keyword id="KW-1003">Cell membrane</keyword>
<keyword id="KW-0472">Membrane</keyword>
<keyword id="KW-0675">Receptor</keyword>
<keyword id="KW-1185">Reference proteome</keyword>
<keyword id="KW-0812">Transmembrane</keyword>
<keyword id="KW-1133">Transmembrane helix</keyword>
<keyword id="KW-0813">Transport</keyword>
<gene>
    <name type="primary">tspO</name>
    <name evidence="6" type="ordered locus">AF_1475</name>
</gene>
<dbReference type="EMBL" id="AE000782">
    <property type="protein sequence ID" value="AAB89774.1"/>
    <property type="molecule type" value="Genomic_DNA"/>
</dbReference>
<dbReference type="PIR" id="B69434">
    <property type="entry name" value="B69434"/>
</dbReference>
<dbReference type="RefSeq" id="WP_010878972.1">
    <property type="nucleotide sequence ID" value="NC_000917.1"/>
</dbReference>
<dbReference type="SMR" id="O28797"/>
<dbReference type="STRING" id="224325.AF_1475"/>
<dbReference type="PaxDb" id="224325-AF_1475"/>
<dbReference type="DNASU" id="1484701"/>
<dbReference type="EnsemblBacteria" id="AAB89774">
    <property type="protein sequence ID" value="AAB89774"/>
    <property type="gene ID" value="AF_1475"/>
</dbReference>
<dbReference type="KEGG" id="afu:AF_1475"/>
<dbReference type="eggNOG" id="arCOG04434">
    <property type="taxonomic scope" value="Archaea"/>
</dbReference>
<dbReference type="HOGENOM" id="CLU_091805_2_0_2"/>
<dbReference type="OrthoDB" id="212929at2157"/>
<dbReference type="PhylomeDB" id="O28797"/>
<dbReference type="Proteomes" id="UP000002199">
    <property type="component" value="Chromosome"/>
</dbReference>
<dbReference type="GO" id="GO:0016020">
    <property type="term" value="C:membrane"/>
    <property type="evidence" value="ECO:0000314"/>
    <property type="project" value="UniProtKB"/>
</dbReference>
<dbReference type="GO" id="GO:0005886">
    <property type="term" value="C:plasma membrane"/>
    <property type="evidence" value="ECO:0007669"/>
    <property type="project" value="UniProtKB-SubCell"/>
</dbReference>
<dbReference type="GO" id="GO:0046906">
    <property type="term" value="F:tetrapyrrole binding"/>
    <property type="evidence" value="ECO:0000314"/>
    <property type="project" value="UniProtKB"/>
</dbReference>
<dbReference type="GO" id="GO:0033013">
    <property type="term" value="P:tetrapyrrole metabolic process"/>
    <property type="evidence" value="ECO:0000314"/>
    <property type="project" value="UniProtKB"/>
</dbReference>
<dbReference type="CDD" id="cd15904">
    <property type="entry name" value="TSPO_MBR"/>
    <property type="match status" value="1"/>
</dbReference>
<dbReference type="FunFam" id="1.20.1260.100:FF:000001">
    <property type="entry name" value="translocator protein 2"/>
    <property type="match status" value="1"/>
</dbReference>
<dbReference type="Gene3D" id="1.20.1260.100">
    <property type="entry name" value="TspO/MBR protein"/>
    <property type="match status" value="1"/>
</dbReference>
<dbReference type="InterPro" id="IPR038330">
    <property type="entry name" value="TspO/MBR-related_sf"/>
</dbReference>
<dbReference type="InterPro" id="IPR004307">
    <property type="entry name" value="TspO_MBR"/>
</dbReference>
<dbReference type="PANTHER" id="PTHR10057">
    <property type="entry name" value="PERIPHERAL-TYPE BENZODIAZEPINE RECEPTOR"/>
    <property type="match status" value="1"/>
</dbReference>
<dbReference type="PANTHER" id="PTHR10057:SF0">
    <property type="entry name" value="TRANSLOCATOR PROTEIN"/>
    <property type="match status" value="1"/>
</dbReference>
<dbReference type="Pfam" id="PF03073">
    <property type="entry name" value="TspO_MBR"/>
    <property type="match status" value="1"/>
</dbReference>
<dbReference type="PIRSF" id="PIRSF005859">
    <property type="entry name" value="PBR"/>
    <property type="match status" value="1"/>
</dbReference>
<protein>
    <recommendedName>
        <fullName evidence="5">Tryptophan-rich protein TspO</fullName>
    </recommendedName>
    <alternativeName>
        <fullName evidence="4">Translocator protein TspO</fullName>
    </alternativeName>
</protein>
<name>TSPO_ARCFU</name>